<reference key="1">
    <citation type="submission" date="2006-12" db="EMBL/GenBank/DDBJ databases">
        <title>Complete sequence of chromosome 1 of Verminephrobacter eiseniae EF01-2.</title>
        <authorList>
            <person name="Copeland A."/>
            <person name="Lucas S."/>
            <person name="Lapidus A."/>
            <person name="Barry K."/>
            <person name="Detter J.C."/>
            <person name="Glavina del Rio T."/>
            <person name="Dalin E."/>
            <person name="Tice H."/>
            <person name="Pitluck S."/>
            <person name="Chertkov O."/>
            <person name="Brettin T."/>
            <person name="Bruce D."/>
            <person name="Han C."/>
            <person name="Tapia R."/>
            <person name="Gilna P."/>
            <person name="Schmutz J."/>
            <person name="Larimer F."/>
            <person name="Land M."/>
            <person name="Hauser L."/>
            <person name="Kyrpides N."/>
            <person name="Kim E."/>
            <person name="Stahl D."/>
            <person name="Richardson P."/>
        </authorList>
    </citation>
    <scope>NUCLEOTIDE SEQUENCE [LARGE SCALE GENOMIC DNA]</scope>
    <source>
        <strain>EF01-2</strain>
    </source>
</reference>
<sequence>MQSSKSSLAALTLGAIGVVYGDIGTSVLYAVKEVFGSGHVPFTQSNVYGILSIFFWTLTVIVSLKYVVLVLRADNHGEGGLVAMLALASQAVKDKPRLRSALLAVGIFGTSLFYGDGVITPAISVLSAIEGLEVVSPHFKKYVIPITLVVLFCLFAVQKRGTGGIGRFFGPITLVWFASIALLGLAHILGHPEILWALSPHHALGFMFANPGTSFIILGAVVLCVTGAEALYADLGHFGKRPIRLAWFGVAMPALTLNYFGQGALLLAEPGAVRNPFYMMAPDWALIPLVVLATMATVIASQALITGAFSVTKQVIQLGYLPRLGIQHTSVRDTGQIYMPLVNWGLFVAIVLAVVMFRSSSNLAAAYGIAVTLDMLITTTLTFFVIRYGWGYPLALCVAATGCFAVVDLAFFASNLLKLFQGGWFPLMIGGIVFALMMTWKEGRRLLNVKLRADALDLKDFLASVFTNPPTRVEGTAVFLTAGTGAVPNALLHNLKHNKVLHQQNLFVTVHNHETPWIGLDRRLQIESLGHDCWQVVIHYGFKNDLDLPRALALLRGRGCDIEPMSTSYFLSRDTVIPTIGSGMAPWREKLFAQMHHNASGAADFLHLPSNAVVELGSKIEI</sequence>
<feature type="chain" id="PRO_0000292620" description="Probable potassium transport system protein Kup">
    <location>
        <begin position="1"/>
        <end position="622"/>
    </location>
</feature>
<feature type="transmembrane region" description="Helical" evidence="1">
    <location>
        <begin position="8"/>
        <end position="28"/>
    </location>
</feature>
<feature type="transmembrane region" description="Helical" evidence="1">
    <location>
        <begin position="50"/>
        <end position="70"/>
    </location>
</feature>
<feature type="transmembrane region" description="Helical" evidence="1">
    <location>
        <begin position="103"/>
        <end position="123"/>
    </location>
</feature>
<feature type="transmembrane region" description="Helical" evidence="1">
    <location>
        <begin position="137"/>
        <end position="157"/>
    </location>
</feature>
<feature type="transmembrane region" description="Helical" evidence="1">
    <location>
        <begin position="168"/>
        <end position="188"/>
    </location>
</feature>
<feature type="transmembrane region" description="Helical" evidence="1">
    <location>
        <begin position="203"/>
        <end position="223"/>
    </location>
</feature>
<feature type="transmembrane region" description="Helical" evidence="1">
    <location>
        <begin position="247"/>
        <end position="267"/>
    </location>
</feature>
<feature type="transmembrane region" description="Helical" evidence="1">
    <location>
        <begin position="285"/>
        <end position="305"/>
    </location>
</feature>
<feature type="transmembrane region" description="Helical" evidence="1">
    <location>
        <begin position="337"/>
        <end position="357"/>
    </location>
</feature>
<feature type="transmembrane region" description="Helical" evidence="1">
    <location>
        <begin position="366"/>
        <end position="386"/>
    </location>
</feature>
<feature type="transmembrane region" description="Helical" evidence="1">
    <location>
        <begin position="393"/>
        <end position="413"/>
    </location>
</feature>
<feature type="transmembrane region" description="Helical" evidence="1">
    <location>
        <begin position="419"/>
        <end position="439"/>
    </location>
</feature>
<gene>
    <name evidence="1" type="primary">kup</name>
    <name type="ordered locus">Veis_1253</name>
</gene>
<name>KUP_VEREI</name>
<accession>A1WHB4</accession>
<proteinExistence type="inferred from homology"/>
<keyword id="KW-0997">Cell inner membrane</keyword>
<keyword id="KW-1003">Cell membrane</keyword>
<keyword id="KW-0406">Ion transport</keyword>
<keyword id="KW-0472">Membrane</keyword>
<keyword id="KW-0630">Potassium</keyword>
<keyword id="KW-0633">Potassium transport</keyword>
<keyword id="KW-1185">Reference proteome</keyword>
<keyword id="KW-0769">Symport</keyword>
<keyword id="KW-0812">Transmembrane</keyword>
<keyword id="KW-1133">Transmembrane helix</keyword>
<keyword id="KW-0813">Transport</keyword>
<dbReference type="EMBL" id="CP000542">
    <property type="protein sequence ID" value="ABM57021.1"/>
    <property type="molecule type" value="Genomic_DNA"/>
</dbReference>
<dbReference type="RefSeq" id="WP_011809032.1">
    <property type="nucleotide sequence ID" value="NC_008786.1"/>
</dbReference>
<dbReference type="STRING" id="391735.Veis_1253"/>
<dbReference type="GeneID" id="76459900"/>
<dbReference type="KEGG" id="vei:Veis_1253"/>
<dbReference type="eggNOG" id="COG3158">
    <property type="taxonomic scope" value="Bacteria"/>
</dbReference>
<dbReference type="HOGENOM" id="CLU_008142_4_2_4"/>
<dbReference type="OrthoDB" id="9805577at2"/>
<dbReference type="Proteomes" id="UP000000374">
    <property type="component" value="Chromosome"/>
</dbReference>
<dbReference type="GO" id="GO:0005886">
    <property type="term" value="C:plasma membrane"/>
    <property type="evidence" value="ECO:0007669"/>
    <property type="project" value="UniProtKB-SubCell"/>
</dbReference>
<dbReference type="GO" id="GO:0015079">
    <property type="term" value="F:potassium ion transmembrane transporter activity"/>
    <property type="evidence" value="ECO:0007669"/>
    <property type="project" value="UniProtKB-UniRule"/>
</dbReference>
<dbReference type="GO" id="GO:0015293">
    <property type="term" value="F:symporter activity"/>
    <property type="evidence" value="ECO:0007669"/>
    <property type="project" value="UniProtKB-UniRule"/>
</dbReference>
<dbReference type="HAMAP" id="MF_01522">
    <property type="entry name" value="Kup"/>
    <property type="match status" value="1"/>
</dbReference>
<dbReference type="InterPro" id="IPR003855">
    <property type="entry name" value="K+_transporter"/>
</dbReference>
<dbReference type="InterPro" id="IPR053952">
    <property type="entry name" value="K_trans_C"/>
</dbReference>
<dbReference type="InterPro" id="IPR053951">
    <property type="entry name" value="K_trans_N"/>
</dbReference>
<dbReference type="InterPro" id="IPR023051">
    <property type="entry name" value="Kup"/>
</dbReference>
<dbReference type="PANTHER" id="PTHR30540:SF79">
    <property type="entry name" value="LOW AFFINITY POTASSIUM TRANSPORT SYSTEM PROTEIN KUP"/>
    <property type="match status" value="1"/>
</dbReference>
<dbReference type="PANTHER" id="PTHR30540">
    <property type="entry name" value="OSMOTIC STRESS POTASSIUM TRANSPORTER"/>
    <property type="match status" value="1"/>
</dbReference>
<dbReference type="Pfam" id="PF02705">
    <property type="entry name" value="K_trans"/>
    <property type="match status" value="1"/>
</dbReference>
<dbReference type="Pfam" id="PF22776">
    <property type="entry name" value="K_trans_C"/>
    <property type="match status" value="1"/>
</dbReference>
<comment type="function">
    <text evidence="1">Transport of potassium into the cell. Likely operates as a K(+):H(+) symporter.</text>
</comment>
<comment type="catalytic activity">
    <reaction evidence="1">
        <text>K(+)(in) + H(+)(in) = K(+)(out) + H(+)(out)</text>
        <dbReference type="Rhea" id="RHEA:28490"/>
        <dbReference type="ChEBI" id="CHEBI:15378"/>
        <dbReference type="ChEBI" id="CHEBI:29103"/>
    </reaction>
    <physiologicalReaction direction="right-to-left" evidence="1">
        <dbReference type="Rhea" id="RHEA:28492"/>
    </physiologicalReaction>
</comment>
<comment type="subcellular location">
    <subcellularLocation>
        <location evidence="1">Cell inner membrane</location>
        <topology evidence="1">Multi-pass membrane protein</topology>
    </subcellularLocation>
</comment>
<comment type="similarity">
    <text evidence="1">Belongs to the HAK/KUP transporter (TC 2.A.72) family.</text>
</comment>
<evidence type="ECO:0000255" key="1">
    <source>
        <dbReference type="HAMAP-Rule" id="MF_01522"/>
    </source>
</evidence>
<organism>
    <name type="scientific">Verminephrobacter eiseniae (strain EF01-2)</name>
    <dbReference type="NCBI Taxonomy" id="391735"/>
    <lineage>
        <taxon>Bacteria</taxon>
        <taxon>Pseudomonadati</taxon>
        <taxon>Pseudomonadota</taxon>
        <taxon>Betaproteobacteria</taxon>
        <taxon>Burkholderiales</taxon>
        <taxon>Comamonadaceae</taxon>
        <taxon>Verminephrobacter</taxon>
    </lineage>
</organism>
<protein>
    <recommendedName>
        <fullName evidence="1">Probable potassium transport system protein Kup</fullName>
    </recommendedName>
</protein>